<dbReference type="EC" id="2.7.11.-"/>
<dbReference type="EMBL" id="AAFI02000073">
    <property type="protein sequence ID" value="EAL64912.1"/>
    <property type="molecule type" value="Genomic_DNA"/>
</dbReference>
<dbReference type="RefSeq" id="XP_639917.1">
    <property type="nucleotide sequence ID" value="XM_634825.1"/>
</dbReference>
<dbReference type="SMR" id="Q54P00"/>
<dbReference type="FunCoup" id="Q54P00">
    <property type="interactions" value="57"/>
</dbReference>
<dbReference type="STRING" id="44689.Q54P00"/>
<dbReference type="PaxDb" id="44689-DDB0216431"/>
<dbReference type="EnsemblProtists" id="EAL64912">
    <property type="protein sequence ID" value="EAL64912"/>
    <property type="gene ID" value="DDB_G0284897"/>
</dbReference>
<dbReference type="GeneID" id="8624829"/>
<dbReference type="KEGG" id="ddi:DDB_G0284897"/>
<dbReference type="dictyBase" id="DDB_G0284897">
    <property type="gene designation" value="abkD"/>
</dbReference>
<dbReference type="VEuPathDB" id="AmoebaDB:DDB_G0284897"/>
<dbReference type="eggNOG" id="KOG1235">
    <property type="taxonomic scope" value="Eukaryota"/>
</dbReference>
<dbReference type="HOGENOM" id="CLU_006533_2_6_1"/>
<dbReference type="InParanoid" id="Q54P00"/>
<dbReference type="OMA" id="LTSEWIH"/>
<dbReference type="PhylomeDB" id="Q54P00"/>
<dbReference type="PRO" id="PR:Q54P00"/>
<dbReference type="Proteomes" id="UP000002195">
    <property type="component" value="Chromosome 4"/>
</dbReference>
<dbReference type="GO" id="GO:0016020">
    <property type="term" value="C:membrane"/>
    <property type="evidence" value="ECO:0007669"/>
    <property type="project" value="UniProtKB-SubCell"/>
</dbReference>
<dbReference type="GO" id="GO:0005524">
    <property type="term" value="F:ATP binding"/>
    <property type="evidence" value="ECO:0007669"/>
    <property type="project" value="UniProtKB-KW"/>
</dbReference>
<dbReference type="GO" id="GO:0004674">
    <property type="term" value="F:protein serine/threonine kinase activity"/>
    <property type="evidence" value="ECO:0007669"/>
    <property type="project" value="UniProtKB-KW"/>
</dbReference>
<dbReference type="GO" id="GO:0099138">
    <property type="term" value="P:altruistic, chimeric sorocarp development"/>
    <property type="evidence" value="ECO:0000315"/>
    <property type="project" value="dictyBase"/>
</dbReference>
<dbReference type="CDD" id="cd13969">
    <property type="entry name" value="ADCK1-like"/>
    <property type="match status" value="1"/>
</dbReference>
<dbReference type="InterPro" id="IPR004147">
    <property type="entry name" value="ABC1_dom"/>
</dbReference>
<dbReference type="InterPro" id="IPR045307">
    <property type="entry name" value="ADCK1_dom"/>
</dbReference>
<dbReference type="InterPro" id="IPR011009">
    <property type="entry name" value="Kinase-like_dom_sf"/>
</dbReference>
<dbReference type="InterPro" id="IPR051130">
    <property type="entry name" value="Mito_struct-func_regulator"/>
</dbReference>
<dbReference type="PANTHER" id="PTHR43173:SF28">
    <property type="entry name" value="AARF DOMAIN CONTAINING KINASE 5"/>
    <property type="match status" value="1"/>
</dbReference>
<dbReference type="PANTHER" id="PTHR43173">
    <property type="entry name" value="ABC1 FAMILY PROTEIN"/>
    <property type="match status" value="1"/>
</dbReference>
<dbReference type="Pfam" id="PF03109">
    <property type="entry name" value="ABC1"/>
    <property type="match status" value="1"/>
</dbReference>
<dbReference type="SUPFAM" id="SSF56112">
    <property type="entry name" value="Protein kinase-like (PK-like)"/>
    <property type="match status" value="1"/>
</dbReference>
<proteinExistence type="evidence at transcript level"/>
<name>ABKD_DICDI</name>
<protein>
    <recommendedName>
        <fullName>Probable serine/threonine-protein kinase abkD</fullName>
        <ecNumber>2.7.11.-</ecNumber>
    </recommendedName>
</protein>
<organism>
    <name type="scientific">Dictyostelium discoideum</name>
    <name type="common">Social amoeba</name>
    <dbReference type="NCBI Taxonomy" id="44689"/>
    <lineage>
        <taxon>Eukaryota</taxon>
        <taxon>Amoebozoa</taxon>
        <taxon>Evosea</taxon>
        <taxon>Eumycetozoa</taxon>
        <taxon>Dictyostelia</taxon>
        <taxon>Dictyosteliales</taxon>
        <taxon>Dictyosteliaceae</taxon>
        <taxon>Dictyostelium</taxon>
    </lineage>
</organism>
<reference key="1">
    <citation type="journal article" date="2005" name="Nature">
        <title>The genome of the social amoeba Dictyostelium discoideum.</title>
        <authorList>
            <person name="Eichinger L."/>
            <person name="Pachebat J.A."/>
            <person name="Gloeckner G."/>
            <person name="Rajandream M.A."/>
            <person name="Sucgang R."/>
            <person name="Berriman M."/>
            <person name="Song J."/>
            <person name="Olsen R."/>
            <person name="Szafranski K."/>
            <person name="Xu Q."/>
            <person name="Tunggal B."/>
            <person name="Kummerfeld S."/>
            <person name="Madera M."/>
            <person name="Konfortov B.A."/>
            <person name="Rivero F."/>
            <person name="Bankier A.T."/>
            <person name="Lehmann R."/>
            <person name="Hamlin N."/>
            <person name="Davies R."/>
            <person name="Gaudet P."/>
            <person name="Fey P."/>
            <person name="Pilcher K."/>
            <person name="Chen G."/>
            <person name="Saunders D."/>
            <person name="Sodergren E.J."/>
            <person name="Davis P."/>
            <person name="Kerhornou A."/>
            <person name="Nie X."/>
            <person name="Hall N."/>
            <person name="Anjard C."/>
            <person name="Hemphill L."/>
            <person name="Bason N."/>
            <person name="Farbrother P."/>
            <person name="Desany B."/>
            <person name="Just E."/>
            <person name="Morio T."/>
            <person name="Rost R."/>
            <person name="Churcher C.M."/>
            <person name="Cooper J."/>
            <person name="Haydock S."/>
            <person name="van Driessche N."/>
            <person name="Cronin A."/>
            <person name="Goodhead I."/>
            <person name="Muzny D.M."/>
            <person name="Mourier T."/>
            <person name="Pain A."/>
            <person name="Lu M."/>
            <person name="Harper D."/>
            <person name="Lindsay R."/>
            <person name="Hauser H."/>
            <person name="James K.D."/>
            <person name="Quiles M."/>
            <person name="Madan Babu M."/>
            <person name="Saito T."/>
            <person name="Buchrieser C."/>
            <person name="Wardroper A."/>
            <person name="Felder M."/>
            <person name="Thangavelu M."/>
            <person name="Johnson D."/>
            <person name="Knights A."/>
            <person name="Loulseged H."/>
            <person name="Mungall K.L."/>
            <person name="Oliver K."/>
            <person name="Price C."/>
            <person name="Quail M.A."/>
            <person name="Urushihara H."/>
            <person name="Hernandez J."/>
            <person name="Rabbinowitsch E."/>
            <person name="Steffen D."/>
            <person name="Sanders M."/>
            <person name="Ma J."/>
            <person name="Kohara Y."/>
            <person name="Sharp S."/>
            <person name="Simmonds M.N."/>
            <person name="Spiegler S."/>
            <person name="Tivey A."/>
            <person name="Sugano S."/>
            <person name="White B."/>
            <person name="Walker D."/>
            <person name="Woodward J.R."/>
            <person name="Winckler T."/>
            <person name="Tanaka Y."/>
            <person name="Shaulsky G."/>
            <person name="Schleicher M."/>
            <person name="Weinstock G.M."/>
            <person name="Rosenthal A."/>
            <person name="Cox E.C."/>
            <person name="Chisholm R.L."/>
            <person name="Gibbs R.A."/>
            <person name="Loomis W.F."/>
            <person name="Platzer M."/>
            <person name="Kay R.R."/>
            <person name="Williams J.G."/>
            <person name="Dear P.H."/>
            <person name="Noegel A.A."/>
            <person name="Barrell B.G."/>
            <person name="Kuspa A."/>
        </authorList>
    </citation>
    <scope>NUCLEOTIDE SEQUENCE [LARGE SCALE GENOMIC DNA]</scope>
    <source>
        <strain>AX4</strain>
    </source>
</reference>
<reference key="2">
    <citation type="journal article" date="2006" name="PLoS Genet.">
        <title>The dictyostelium kinome -- analysis of the protein kinases from a simple model organism.</title>
        <authorList>
            <person name="Goldberg J.M."/>
            <person name="Manning G."/>
            <person name="Liu A."/>
            <person name="Fey P."/>
            <person name="Pilcher K.E."/>
            <person name="Xu Y."/>
            <person name="Smith J.L."/>
        </authorList>
    </citation>
    <scope>GENE FAMILY</scope>
    <scope>NOMENCLATURE</scope>
</reference>
<reference key="3">
    <citation type="journal article" date="2008" name="BMC Microbiol.">
        <title>Dictyostelium transcriptional responses to Pseudomonas aeruginosa: common and specific effects from PAO1 and PA14 strains.</title>
        <authorList>
            <person name="Carilla-Latorre S."/>
            <person name="Calvo-Garrido J."/>
            <person name="Bloomfield G."/>
            <person name="Skelton J."/>
            <person name="Kay R.R."/>
            <person name="Ivens A."/>
            <person name="Martinez J.L."/>
            <person name="Escalante R."/>
        </authorList>
    </citation>
    <scope>INDUCTION [LARGE SCALE ANALYSIS]</scope>
</reference>
<accession>Q54P00</accession>
<keyword id="KW-0067">ATP-binding</keyword>
<keyword id="KW-0175">Coiled coil</keyword>
<keyword id="KW-0418">Kinase</keyword>
<keyword id="KW-0472">Membrane</keyword>
<keyword id="KW-0547">Nucleotide-binding</keyword>
<keyword id="KW-1185">Reference proteome</keyword>
<keyword id="KW-0723">Serine/threonine-protein kinase</keyword>
<keyword id="KW-0808">Transferase</keyword>
<keyword id="KW-0812">Transmembrane</keyword>
<keyword id="KW-1133">Transmembrane helix</keyword>
<evidence type="ECO:0000250" key="1"/>
<evidence type="ECO:0000255" key="2"/>
<evidence type="ECO:0000256" key="3">
    <source>
        <dbReference type="SAM" id="MobiDB-lite"/>
    </source>
</evidence>
<evidence type="ECO:0000305" key="4"/>
<comment type="subcellular location">
    <subcellularLocation>
        <location evidence="4">Membrane</location>
        <topology evidence="4">Single-pass membrane protein</topology>
    </subcellularLocation>
</comment>
<comment type="similarity">
    <text evidence="4">Belongs to the protein kinase superfamily. ADCK protein kinase family.</text>
</comment>
<gene>
    <name type="primary">abkD</name>
    <name type="synonym">adckB2</name>
    <name type="ORF">DDB_G0284897</name>
</gene>
<feature type="chain" id="PRO_0000367579" description="Probable serine/threonine-protein kinase abkD">
    <location>
        <begin position="1"/>
        <end position="695"/>
    </location>
</feature>
<feature type="transmembrane region" description="Helical" evidence="2">
    <location>
        <begin position="177"/>
        <end position="193"/>
    </location>
</feature>
<feature type="domain" description="Protein kinase">
    <location>
        <begin position="317"/>
        <end position="695"/>
    </location>
</feature>
<feature type="region of interest" description="Disordered" evidence="3">
    <location>
        <begin position="105"/>
        <end position="149"/>
    </location>
</feature>
<feature type="coiled-coil region" evidence="2">
    <location>
        <begin position="118"/>
        <end position="150"/>
    </location>
</feature>
<feature type="compositionally biased region" description="Polar residues" evidence="3">
    <location>
        <begin position="105"/>
        <end position="119"/>
    </location>
</feature>
<feature type="compositionally biased region" description="Low complexity" evidence="3">
    <location>
        <begin position="120"/>
        <end position="139"/>
    </location>
</feature>
<feature type="active site" description="Proton acceptor" evidence="1">
    <location>
        <position position="477"/>
    </location>
</feature>
<feature type="binding site" evidence="1">
    <location>
        <begin position="323"/>
        <end position="331"/>
    </location>
    <ligand>
        <name>ATP</name>
        <dbReference type="ChEBI" id="CHEBI:30616"/>
    </ligand>
</feature>
<feature type="binding site" evidence="1">
    <location>
        <position position="345"/>
    </location>
    <ligand>
        <name>ATP</name>
        <dbReference type="ChEBI" id="CHEBI:30616"/>
    </ligand>
</feature>
<sequence>MKILKFSLLSKLKHKDFIVTSFRNNIINSIKNNNTNNNGLLKFSNNKYNFLNNNNNNNNNNVNKINNVYYINNNFKNVMENKIKPSSIQFFSSLSNKYNLNSFTTTKPQPCQAKPPSSKQQQQQQQQQQQQQQQQQQQQSKKKTSKDRLRDILKKTVITPQEFLNVLQRFAKNYKKTIASILAAIALIIYSYETPDSYFGSMMNVIVRFYRAMKCATKIMINYKILSYTPEKSSEYLEKSKICHQESADLILDLCLTNGGLYIKAGQYIASLNHILPIQYTKTLSVLQDQAPWRDFYEVESVFLKDLGNAPNHYFSDFDRLPIAAASLAQVHRAITKEGEEVAVKVQYVDLQRNFDGDIFTHNVLLTLVNMAFPDFEFNWMAEEMKNVLIKELDFSQEADNAERAAQDLSSNNNAYIPKVFRPYSSKRILTTEFIHGCKINNVQAIRSMGLSEKTVSQRFMEIMCEQIFIHAFVHVDPHAGNVLVRQHPNHPNQPQIVLLDHGLYREYDEEFRLNFCNLYKNLVLCNNKKVEKYSKALGVQNWKLFSTMILMRNFEGSSVGLSNSISSEELEKLLSGAIERLKDINLLMKAMPRHLLLILRNNNLLRSINMELGSPVNRFSIMARYAAKGLNSNSSKNSGIIRLVKSVEEKVSLEVMLKGYELYYYFVNRILSILIRLHIINPEKLIKDQMKKLG</sequence>